<name>MIP_LITPI</name>
<keyword id="KW-0965">Cell junction</keyword>
<keyword id="KW-1003">Cell membrane</keyword>
<keyword id="KW-0903">Direct protein sequencing</keyword>
<keyword id="KW-0273">Eye lens protein</keyword>
<keyword id="KW-0472">Membrane</keyword>
<keyword id="KW-0677">Repeat</keyword>
<keyword id="KW-0812">Transmembrane</keyword>
<keyword id="KW-1133">Transmembrane helix</keyword>
<keyword id="KW-0813">Transport</keyword>
<comment type="function">
    <text evidence="2">Aquaporins form homotetrameric transmembrane channels, with each monomer independently mediating water transport across the plasma membrane along its osmotic gradient. Specifically expressed in lens fiber cells, this aquaporin is crucial for maintaining lens water homeostasis and transparency. Beyond water permeability, it also acts as a cell-to-cell adhesion molecule, forming thin junctions between lens fiber cells that are essential for maintaining the ordered structure and transparency of the lens.</text>
</comment>
<comment type="catalytic activity">
    <reaction evidence="2">
        <text>H2O(in) = H2O(out)</text>
        <dbReference type="Rhea" id="RHEA:29667"/>
        <dbReference type="ChEBI" id="CHEBI:15377"/>
    </reaction>
</comment>
<comment type="activity regulation">
    <text evidence="2">The water channel activity is inhibited by calcium through calmodulin/CALM.</text>
</comment>
<comment type="subunit">
    <text evidence="1">Homotetramer; each monomer provides an independent water pore. Two homotetramers on opposing membranes can dimerize, forming a cell-cell junction. Interacts with CALM; the calcium-calmodulin/CALM complex interacts with the cytoplasmic domains of two aquaporins, leading to channel closure.</text>
</comment>
<comment type="subcellular location">
    <subcellularLocation>
        <location evidence="2">Cell membrane</location>
        <topology evidence="3">Multi-pass membrane protein</topology>
    </subcellularLocation>
    <subcellularLocation>
        <location evidence="3">Cell junction</location>
    </subcellularLocation>
    <text evidence="3">Localizes to thin cell-cell junctions in lens fiber cells.</text>
</comment>
<comment type="domain">
    <text evidence="3">Aquaporins contain two tandem repeats each containing three membrane-spanning domains and a pore-forming loop with the signature motif Asn-Pro-Ala (NPA).</text>
</comment>
<comment type="similarity">
    <text evidence="6">Belongs to the MIP/aquaporin (TC 1.A.8) family.</text>
</comment>
<dbReference type="EMBL" id="X56970">
    <property type="protein sequence ID" value="CAA40291.1"/>
    <property type="molecule type" value="mRNA"/>
</dbReference>
<dbReference type="SMR" id="Q06019"/>
<dbReference type="TCDB" id="1.A.8.8.14">
    <property type="family name" value="the major intrinsic protein (mip) family"/>
</dbReference>
<dbReference type="GO" id="GO:0070161">
    <property type="term" value="C:anchoring junction"/>
    <property type="evidence" value="ECO:0007669"/>
    <property type="project" value="UniProtKB-SubCell"/>
</dbReference>
<dbReference type="GO" id="GO:0016324">
    <property type="term" value="C:apical plasma membrane"/>
    <property type="evidence" value="ECO:0007669"/>
    <property type="project" value="TreeGrafter"/>
</dbReference>
<dbReference type="GO" id="GO:0005886">
    <property type="term" value="C:plasma membrane"/>
    <property type="evidence" value="ECO:0000250"/>
    <property type="project" value="UniProtKB"/>
</dbReference>
<dbReference type="GO" id="GO:0098631">
    <property type="term" value="F:cell adhesion mediator activity"/>
    <property type="evidence" value="ECO:0000250"/>
    <property type="project" value="UniProtKB"/>
</dbReference>
<dbReference type="GO" id="GO:0005212">
    <property type="term" value="F:structural constituent of eye lens"/>
    <property type="evidence" value="ECO:0007669"/>
    <property type="project" value="UniProtKB-KW"/>
</dbReference>
<dbReference type="GO" id="GO:0015250">
    <property type="term" value="F:water channel activity"/>
    <property type="evidence" value="ECO:0000250"/>
    <property type="project" value="UniProtKB"/>
</dbReference>
<dbReference type="GO" id="GO:0034109">
    <property type="term" value="P:homotypic cell-cell adhesion"/>
    <property type="evidence" value="ECO:0000250"/>
    <property type="project" value="UniProtKB"/>
</dbReference>
<dbReference type="GO" id="GO:0036438">
    <property type="term" value="P:maintenance of lens transparency"/>
    <property type="evidence" value="ECO:0000250"/>
    <property type="project" value="UniProtKB"/>
</dbReference>
<dbReference type="GO" id="GO:0006833">
    <property type="term" value="P:water transport"/>
    <property type="evidence" value="ECO:0000250"/>
    <property type="project" value="UniProtKB"/>
</dbReference>
<dbReference type="CDD" id="cd00333">
    <property type="entry name" value="MIP"/>
    <property type="match status" value="1"/>
</dbReference>
<dbReference type="FunFam" id="1.20.1080.10:FF:000003">
    <property type="entry name" value="Lens fiber major intrinsic"/>
    <property type="match status" value="1"/>
</dbReference>
<dbReference type="Gene3D" id="1.20.1080.10">
    <property type="entry name" value="Glycerol uptake facilitator protein"/>
    <property type="match status" value="1"/>
</dbReference>
<dbReference type="InterPro" id="IPR023271">
    <property type="entry name" value="Aquaporin-like"/>
</dbReference>
<dbReference type="InterPro" id="IPR034294">
    <property type="entry name" value="Aquaporin_transptr"/>
</dbReference>
<dbReference type="InterPro" id="IPR000425">
    <property type="entry name" value="MIP"/>
</dbReference>
<dbReference type="InterPro" id="IPR022357">
    <property type="entry name" value="MIP_CS"/>
</dbReference>
<dbReference type="NCBIfam" id="TIGR00861">
    <property type="entry name" value="MIP"/>
    <property type="match status" value="1"/>
</dbReference>
<dbReference type="PANTHER" id="PTHR19139">
    <property type="entry name" value="AQUAPORIN TRANSPORTER"/>
    <property type="match status" value="1"/>
</dbReference>
<dbReference type="PANTHER" id="PTHR19139:SF39">
    <property type="entry name" value="LENS FIBER MAJOR INTRINSIC PROTEIN"/>
    <property type="match status" value="1"/>
</dbReference>
<dbReference type="Pfam" id="PF00230">
    <property type="entry name" value="MIP"/>
    <property type="match status" value="1"/>
</dbReference>
<dbReference type="PRINTS" id="PR02014">
    <property type="entry name" value="AQUAPORIN2"/>
</dbReference>
<dbReference type="PRINTS" id="PR00783">
    <property type="entry name" value="MINTRINSICP"/>
</dbReference>
<dbReference type="SUPFAM" id="SSF81338">
    <property type="entry name" value="Aquaporin-like"/>
    <property type="match status" value="1"/>
</dbReference>
<dbReference type="PROSITE" id="PS00221">
    <property type="entry name" value="MIP"/>
    <property type="match status" value="1"/>
</dbReference>
<proteinExistence type="evidence at protein level"/>
<accession>Q06019</accession>
<organism>
    <name type="scientific">Lithobates pipiens</name>
    <name type="common">Northern leopard frog</name>
    <name type="synonym">Rana pipiens</name>
    <dbReference type="NCBI Taxonomy" id="8404"/>
    <lineage>
        <taxon>Eukaryota</taxon>
        <taxon>Metazoa</taxon>
        <taxon>Chordata</taxon>
        <taxon>Craniata</taxon>
        <taxon>Vertebrata</taxon>
        <taxon>Euteleostomi</taxon>
        <taxon>Amphibia</taxon>
        <taxon>Batrachia</taxon>
        <taxon>Anura</taxon>
        <taxon>Neobatrachia</taxon>
        <taxon>Ranoidea</taxon>
        <taxon>Ranidae</taxon>
        <taxon>Lithobates</taxon>
    </lineage>
</organism>
<gene>
    <name evidence="5" type="primary">MIP</name>
</gene>
<feature type="chain" id="PRO_0000063917" description="Lens fiber major intrinsic protein">
    <location>
        <begin position="1"/>
        <end position="263"/>
    </location>
</feature>
<feature type="topological domain" description="Cytoplasmic" evidence="1">
    <location>
        <begin position="1"/>
        <end position="9"/>
    </location>
</feature>
<feature type="transmembrane region" description="Helical; Name=1" evidence="1">
    <location>
        <begin position="10"/>
        <end position="29"/>
    </location>
</feature>
<feature type="topological domain" description="Extracellular" evidence="1">
    <location>
        <begin position="30"/>
        <end position="41"/>
    </location>
</feature>
<feature type="transmembrane region" description="Helical; Name=2" evidence="1">
    <location>
        <begin position="42"/>
        <end position="59"/>
    </location>
</feature>
<feature type="topological domain" description="Cytoplasmic" evidence="1">
    <location>
        <begin position="60"/>
        <end position="61"/>
    </location>
</feature>
<feature type="intramembrane region" description="Discontinuously helical" evidence="1">
    <location>
        <begin position="62"/>
        <end position="77"/>
    </location>
</feature>
<feature type="topological domain" description="Cytoplasmic" evidence="1">
    <location>
        <begin position="78"/>
        <end position="82"/>
    </location>
</feature>
<feature type="transmembrane region" description="Helical; Name=3" evidence="1">
    <location>
        <begin position="83"/>
        <end position="106"/>
    </location>
</feature>
<feature type="topological domain" description="Extracellular" evidence="1">
    <location>
        <begin position="107"/>
        <end position="127"/>
    </location>
</feature>
<feature type="transmembrane region" description="Helical; Name=4" evidence="1">
    <location>
        <begin position="128"/>
        <end position="148"/>
    </location>
</feature>
<feature type="topological domain" description="Cytoplasmic" evidence="1">
    <location>
        <begin position="149"/>
        <end position="156"/>
    </location>
</feature>
<feature type="transmembrane region" description="Helical; Name=5" evidence="1">
    <location>
        <begin position="157"/>
        <end position="175"/>
    </location>
</feature>
<feature type="topological domain" description="Extracellular" evidence="1">
    <location>
        <begin position="176"/>
        <end position="178"/>
    </location>
</feature>
<feature type="intramembrane region" description="Discontinuously helical" evidence="1">
    <location>
        <begin position="179"/>
        <end position="193"/>
    </location>
</feature>
<feature type="topological domain" description="Extracellular" evidence="1">
    <location>
        <begin position="194"/>
        <end position="200"/>
    </location>
</feature>
<feature type="transmembrane region" description="Helical; Name=6" evidence="1">
    <location>
        <begin position="201"/>
        <end position="222"/>
    </location>
</feature>
<feature type="topological domain" description="Cytoplasmic" evidence="1">
    <location>
        <begin position="223"/>
        <end position="263"/>
    </location>
</feature>
<feature type="region of interest" description="Interaction with CALM" evidence="1">
    <location>
        <begin position="227"/>
        <end position="237"/>
    </location>
</feature>
<feature type="region of interest" description="Disordered" evidence="4">
    <location>
        <begin position="241"/>
        <end position="263"/>
    </location>
</feature>
<feature type="short sequence motif" description="NPA 1" evidence="1">
    <location>
        <begin position="68"/>
        <end position="70"/>
    </location>
</feature>
<feature type="short sequence motif" description="NPA 2" evidence="1">
    <location>
        <begin position="184"/>
        <end position="186"/>
    </location>
</feature>
<feature type="site" description="Important for water channel gating" evidence="1">
    <location>
        <position position="149"/>
    </location>
</feature>
<protein>
    <recommendedName>
        <fullName evidence="7">Lens fiber major intrinsic protein</fullName>
    </recommendedName>
    <alternativeName>
        <fullName evidence="2">MIP26</fullName>
        <shortName evidence="2">MP26</shortName>
    </alternativeName>
</protein>
<evidence type="ECO:0000250" key="1">
    <source>
        <dbReference type="UniProtKB" id="P06624"/>
    </source>
</evidence>
<evidence type="ECO:0000250" key="2">
    <source>
        <dbReference type="UniProtKB" id="P30301"/>
    </source>
</evidence>
<evidence type="ECO:0000250" key="3">
    <source>
        <dbReference type="UniProtKB" id="Q6J8I9"/>
    </source>
</evidence>
<evidence type="ECO:0000256" key="4">
    <source>
        <dbReference type="SAM" id="MobiDB-lite"/>
    </source>
</evidence>
<evidence type="ECO:0000303" key="5">
    <source>
    </source>
</evidence>
<evidence type="ECO:0000305" key="6"/>
<evidence type="ECO:0000305" key="7">
    <source>
    </source>
</evidence>
<reference key="1">
    <citation type="journal article" date="1993" name="Gene">
        <title>The cDNA sequence encoding the major intrinsic protein of frog lens.</title>
        <authorList>
            <person name="Austin L.R."/>
            <person name="Rice S.J."/>
            <person name="Baldo G.J."/>
            <person name="Lange A.J."/>
            <person name="Haspel H.C."/>
            <person name="Mathias R.T."/>
        </authorList>
    </citation>
    <scope>NUCLEOTIDE SEQUENCE [MRNA] OF 2-263</scope>
    <scope>PROTEIN SEQUENCE OF 1-4 AND 6-14</scope>
    <source>
        <tissue>Lens</tissue>
    </source>
</reference>
<sequence length="263" mass="28383">MWEFRSFSFWRAVFAEFFGTMFYVFFGLGASLKWAAGPANVLVIALAFGLVLATMVQSIGHVSGAHINPAVTFAFLIGSQMSLFRAIFYIAAQLLGAVAGAAVLYGVTPAAIRGNLALNTLHPGVSLGQATTVEIFLTLQFVLCIFATYDERRNGRLGSVSLAIGFSLTLGHLFGLYYTGASMNPARSFAPAVLTRNFTNHWVYWVGPIIGGALGGLVYDFILFPRMRGLSERLSILKGARPAEPEGQQEATGEPIELKTQSL</sequence>